<evidence type="ECO:0000250" key="1">
    <source>
        <dbReference type="UniProtKB" id="P0AE01"/>
    </source>
</evidence>
<evidence type="ECO:0000305" key="2"/>
<proteinExistence type="inferred from homology"/>
<keyword id="KW-0963">Cytoplasm</keyword>
<keyword id="KW-0489">Methyltransferase</keyword>
<keyword id="KW-1185">Reference proteome</keyword>
<keyword id="KW-0949">S-adenosyl-L-methionine</keyword>
<keyword id="KW-0808">Transferase</keyword>
<keyword id="KW-0819">tRNA processing</keyword>
<comment type="function">
    <text evidence="1">Catalyzes the formation of 2'O-methylated cytidine (Cm32) or 2'O-methylated uridine (Um32) at position 32 in tRNA.</text>
</comment>
<comment type="catalytic activity">
    <reaction evidence="1">
        <text>cytidine(32) in tRNA + S-adenosyl-L-methionine = 2'-O-methylcytidine(32) in tRNA + S-adenosyl-L-homocysteine + H(+)</text>
        <dbReference type="Rhea" id="RHEA:42932"/>
        <dbReference type="Rhea" id="RHEA-COMP:10288"/>
        <dbReference type="Rhea" id="RHEA-COMP:10289"/>
        <dbReference type="ChEBI" id="CHEBI:15378"/>
        <dbReference type="ChEBI" id="CHEBI:57856"/>
        <dbReference type="ChEBI" id="CHEBI:59789"/>
        <dbReference type="ChEBI" id="CHEBI:74495"/>
        <dbReference type="ChEBI" id="CHEBI:82748"/>
        <dbReference type="EC" id="2.1.1.200"/>
    </reaction>
</comment>
<comment type="catalytic activity">
    <reaction evidence="1">
        <text>uridine(32) in tRNA + S-adenosyl-L-methionine = 2'-O-methyluridine(32) in tRNA + S-adenosyl-L-homocysteine + H(+)</text>
        <dbReference type="Rhea" id="RHEA:42936"/>
        <dbReference type="Rhea" id="RHEA-COMP:10107"/>
        <dbReference type="Rhea" id="RHEA-COMP:10290"/>
        <dbReference type="ChEBI" id="CHEBI:15378"/>
        <dbReference type="ChEBI" id="CHEBI:57856"/>
        <dbReference type="ChEBI" id="CHEBI:59789"/>
        <dbReference type="ChEBI" id="CHEBI:65315"/>
        <dbReference type="ChEBI" id="CHEBI:74478"/>
        <dbReference type="EC" id="2.1.1.200"/>
    </reaction>
</comment>
<comment type="subunit">
    <text evidence="1">Homodimer.</text>
</comment>
<comment type="subcellular location">
    <subcellularLocation>
        <location evidence="1">Cytoplasm</location>
    </subcellularLocation>
</comment>
<comment type="similarity">
    <text evidence="2">Belongs to the class IV-like SAM-binding methyltransferase superfamily. RNA methyltransferase TrmH family.</text>
</comment>
<protein>
    <recommendedName>
        <fullName evidence="1">tRNA (cytidine/uridine-2'-O-)-methyltransferase TrmJ</fullName>
        <ecNumber evidence="1">2.1.1.200</ecNumber>
    </recommendedName>
    <alternativeName>
        <fullName evidence="1">tRNA (cytidine(32)/uridine(32)-2'-O)-methyltransferase</fullName>
    </alternativeName>
    <alternativeName>
        <fullName evidence="1">tRNA Cm32/Um32 methyltransferase</fullName>
    </alternativeName>
</protein>
<feature type="chain" id="PRO_0000159828" description="tRNA (cytidine/uridine-2'-O-)-methyltransferase TrmJ">
    <location>
        <begin position="1"/>
        <end position="243"/>
    </location>
</feature>
<feature type="binding site" evidence="1">
    <location>
        <begin position="79"/>
        <end position="81"/>
    </location>
    <ligand>
        <name>S-adenosyl-L-methionine</name>
        <dbReference type="ChEBI" id="CHEBI:59789"/>
    </ligand>
</feature>
<feature type="binding site" evidence="1">
    <location>
        <position position="114"/>
    </location>
    <ligand>
        <name>S-adenosyl-L-methionine</name>
        <dbReference type="ChEBI" id="CHEBI:59789"/>
    </ligand>
</feature>
<feature type="binding site" evidence="1">
    <location>
        <position position="134"/>
    </location>
    <ligand>
        <name>S-adenosyl-L-methionine</name>
        <dbReference type="ChEBI" id="CHEBI:59789"/>
    </ligand>
</feature>
<feature type="binding site" evidence="1">
    <location>
        <begin position="141"/>
        <end position="143"/>
    </location>
    <ligand>
        <name>S-adenosyl-L-methionine</name>
        <dbReference type="ChEBI" id="CHEBI:59789"/>
    </ligand>
</feature>
<sequence>MLQNIRIVLVETSHTGNMGSVARAMKTMGLTNLWLVNPLVKPDSQAIALAAGASDVIGNAQIVDTLDEALAGCSLVVGTSARSRTLPWPMLDPRECGLKSVAEAANTPVALVFGRERVGLTNDELQKCHYHVAIAANPEYSSLNLAMAVQVIAYEVRMAWLATQENGDAADHEETPYPLVDDLERFYGHLEQTLLSTGFIRENHPGQVMNKLRRLFTRARPESQELNILRGILASIEQQNKGK</sequence>
<reference key="1">
    <citation type="journal article" date="2001" name="Nature">
        <title>Complete genome sequence of Salmonella enterica serovar Typhimurium LT2.</title>
        <authorList>
            <person name="McClelland M."/>
            <person name="Sanderson K.E."/>
            <person name="Spieth J."/>
            <person name="Clifton S.W."/>
            <person name="Latreille P."/>
            <person name="Courtney L."/>
            <person name="Porwollik S."/>
            <person name="Ali J."/>
            <person name="Dante M."/>
            <person name="Du F."/>
            <person name="Hou S."/>
            <person name="Layman D."/>
            <person name="Leonard S."/>
            <person name="Nguyen C."/>
            <person name="Scott K."/>
            <person name="Holmes A."/>
            <person name="Grewal N."/>
            <person name="Mulvaney E."/>
            <person name="Ryan E."/>
            <person name="Sun H."/>
            <person name="Florea L."/>
            <person name="Miller W."/>
            <person name="Stoneking T."/>
            <person name="Nhan M."/>
            <person name="Waterston R."/>
            <person name="Wilson R.K."/>
        </authorList>
    </citation>
    <scope>NUCLEOTIDE SEQUENCE [LARGE SCALE GENOMIC DNA]</scope>
    <source>
        <strain>LT2 / SGSC1412 / ATCC 700720</strain>
    </source>
</reference>
<dbReference type="EC" id="2.1.1.200" evidence="1"/>
<dbReference type="EMBL" id="AE006468">
    <property type="protein sequence ID" value="AAL21439.1"/>
    <property type="molecule type" value="Genomic_DNA"/>
</dbReference>
<dbReference type="RefSeq" id="NP_461480.1">
    <property type="nucleotide sequence ID" value="NC_003197.2"/>
</dbReference>
<dbReference type="RefSeq" id="WP_000940032.1">
    <property type="nucleotide sequence ID" value="NC_003197.2"/>
</dbReference>
<dbReference type="SMR" id="P66974"/>
<dbReference type="STRING" id="99287.STM2545"/>
<dbReference type="PaxDb" id="99287-STM2545"/>
<dbReference type="GeneID" id="1254067"/>
<dbReference type="KEGG" id="stm:STM2545"/>
<dbReference type="PATRIC" id="fig|99287.12.peg.2685"/>
<dbReference type="HOGENOM" id="CLU_056931_0_1_6"/>
<dbReference type="OMA" id="ARVMKNM"/>
<dbReference type="PhylomeDB" id="P66974"/>
<dbReference type="BioCyc" id="SENT99287:STM2545-MONOMER"/>
<dbReference type="Proteomes" id="UP000001014">
    <property type="component" value="Chromosome"/>
</dbReference>
<dbReference type="GO" id="GO:0005829">
    <property type="term" value="C:cytosol"/>
    <property type="evidence" value="ECO:0000318"/>
    <property type="project" value="GO_Central"/>
</dbReference>
<dbReference type="GO" id="GO:0003723">
    <property type="term" value="F:RNA binding"/>
    <property type="evidence" value="ECO:0007669"/>
    <property type="project" value="InterPro"/>
</dbReference>
<dbReference type="GO" id="GO:0160206">
    <property type="term" value="F:tRNA (cytidine(32)/uridine(32)-2'-O)-methyltransferase activity"/>
    <property type="evidence" value="ECO:0007669"/>
    <property type="project" value="UniProtKB-EC"/>
</dbReference>
<dbReference type="GO" id="GO:0002128">
    <property type="term" value="P:tRNA nucleoside ribose methylation"/>
    <property type="evidence" value="ECO:0000318"/>
    <property type="project" value="GO_Central"/>
</dbReference>
<dbReference type="CDD" id="cd18093">
    <property type="entry name" value="SpoU-like_TrmJ"/>
    <property type="match status" value="1"/>
</dbReference>
<dbReference type="FunFam" id="1.10.8.590:FF:000001">
    <property type="entry name" value="tRNA:Cm32/Um32 methyltransferase"/>
    <property type="match status" value="1"/>
</dbReference>
<dbReference type="FunFam" id="3.40.1280.10:FF:000006">
    <property type="entry name" value="Uncharacterized tRNA/rRNA methyltransferase HI_0380"/>
    <property type="match status" value="1"/>
</dbReference>
<dbReference type="Gene3D" id="1.10.8.590">
    <property type="match status" value="1"/>
</dbReference>
<dbReference type="Gene3D" id="3.40.1280.10">
    <property type="match status" value="1"/>
</dbReference>
<dbReference type="InterPro" id="IPR029028">
    <property type="entry name" value="Alpha/beta_knot_MTases"/>
</dbReference>
<dbReference type="InterPro" id="IPR004384">
    <property type="entry name" value="RNA_MeTrfase_TrmJ/LasT"/>
</dbReference>
<dbReference type="InterPro" id="IPR001537">
    <property type="entry name" value="SpoU_MeTrfase"/>
</dbReference>
<dbReference type="InterPro" id="IPR029026">
    <property type="entry name" value="tRNA_m1G_MTases_N"/>
</dbReference>
<dbReference type="NCBIfam" id="NF011694">
    <property type="entry name" value="PRK15114.1"/>
    <property type="match status" value="1"/>
</dbReference>
<dbReference type="NCBIfam" id="TIGR00050">
    <property type="entry name" value="rRNA_methyl_1"/>
    <property type="match status" value="1"/>
</dbReference>
<dbReference type="PANTHER" id="PTHR42786:SF2">
    <property type="entry name" value="TRNA (CYTIDINE_URIDINE-2'-O-)-METHYLTRANSFERASE TRMJ"/>
    <property type="match status" value="1"/>
</dbReference>
<dbReference type="PANTHER" id="PTHR42786">
    <property type="entry name" value="TRNA/RRNA METHYLTRANSFERASE"/>
    <property type="match status" value="1"/>
</dbReference>
<dbReference type="Pfam" id="PF00588">
    <property type="entry name" value="SpoU_methylase"/>
    <property type="match status" value="1"/>
</dbReference>
<dbReference type="PIRSF" id="PIRSF004808">
    <property type="entry name" value="LasT"/>
    <property type="match status" value="1"/>
</dbReference>
<dbReference type="SUPFAM" id="SSF75217">
    <property type="entry name" value="alpha/beta knot"/>
    <property type="match status" value="1"/>
</dbReference>
<name>TRMJ_SALTY</name>
<accession>P66974</accession>
<accession>Q8XEM9</accession>
<gene>
    <name type="primary">trmJ</name>
    <name type="ordered locus">STM2545</name>
</gene>
<organism>
    <name type="scientific">Salmonella typhimurium (strain LT2 / SGSC1412 / ATCC 700720)</name>
    <dbReference type="NCBI Taxonomy" id="99287"/>
    <lineage>
        <taxon>Bacteria</taxon>
        <taxon>Pseudomonadati</taxon>
        <taxon>Pseudomonadota</taxon>
        <taxon>Gammaproteobacteria</taxon>
        <taxon>Enterobacterales</taxon>
        <taxon>Enterobacteriaceae</taxon>
        <taxon>Salmonella</taxon>
    </lineage>
</organism>